<keyword id="KW-0474">Menaquinone biosynthesis</keyword>
<keyword id="KW-0489">Methyltransferase</keyword>
<keyword id="KW-0949">S-adenosyl-L-methionine</keyword>
<keyword id="KW-0808">Transferase</keyword>
<keyword id="KW-0831">Ubiquinone biosynthesis</keyword>
<name>UBIE_WOLPM</name>
<organism>
    <name type="scientific">Wolbachia pipientis wMel</name>
    <dbReference type="NCBI Taxonomy" id="163164"/>
    <lineage>
        <taxon>Bacteria</taxon>
        <taxon>Pseudomonadati</taxon>
        <taxon>Pseudomonadota</taxon>
        <taxon>Alphaproteobacteria</taxon>
        <taxon>Rickettsiales</taxon>
        <taxon>Anaplasmataceae</taxon>
        <taxon>Wolbachieae</taxon>
        <taxon>Wolbachia</taxon>
    </lineage>
</organism>
<protein>
    <recommendedName>
        <fullName evidence="1">Ubiquinone/menaquinone biosynthesis C-methyltransferase UbiE</fullName>
        <ecNumber evidence="1">2.1.1.163</ecNumber>
        <ecNumber evidence="1">2.1.1.201</ecNumber>
    </recommendedName>
    <alternativeName>
        <fullName evidence="1">2-methoxy-6-polyprenyl-1,4-benzoquinol methylase</fullName>
    </alternativeName>
    <alternativeName>
        <fullName evidence="1">Demethylmenaquinone methyltransferase</fullName>
    </alternativeName>
</protein>
<gene>
    <name evidence="1" type="primary">ubiE</name>
    <name type="ordered locus">WD_0393</name>
</gene>
<comment type="function">
    <text evidence="1">Methyltransferase required for the conversion of demethylmenaquinol (DMKH2) to menaquinol (MKH2) and the conversion of 2-polyprenyl-6-methoxy-1,4-benzoquinol (DDMQH2) to 2-polyprenyl-3-methyl-6-methoxy-1,4-benzoquinol (DMQH2).</text>
</comment>
<comment type="catalytic activity">
    <reaction evidence="1">
        <text>a 2-demethylmenaquinol + S-adenosyl-L-methionine = a menaquinol + S-adenosyl-L-homocysteine + H(+)</text>
        <dbReference type="Rhea" id="RHEA:42640"/>
        <dbReference type="Rhea" id="RHEA-COMP:9539"/>
        <dbReference type="Rhea" id="RHEA-COMP:9563"/>
        <dbReference type="ChEBI" id="CHEBI:15378"/>
        <dbReference type="ChEBI" id="CHEBI:18151"/>
        <dbReference type="ChEBI" id="CHEBI:55437"/>
        <dbReference type="ChEBI" id="CHEBI:57856"/>
        <dbReference type="ChEBI" id="CHEBI:59789"/>
        <dbReference type="EC" id="2.1.1.163"/>
    </reaction>
</comment>
<comment type="catalytic activity">
    <reaction evidence="1">
        <text>a 2-methoxy-6-(all-trans-polyprenyl)benzene-1,4-diol + S-adenosyl-L-methionine = a 5-methoxy-2-methyl-3-(all-trans-polyprenyl)benzene-1,4-diol + S-adenosyl-L-homocysteine + H(+)</text>
        <dbReference type="Rhea" id="RHEA:28286"/>
        <dbReference type="Rhea" id="RHEA-COMP:10858"/>
        <dbReference type="Rhea" id="RHEA-COMP:10859"/>
        <dbReference type="ChEBI" id="CHEBI:15378"/>
        <dbReference type="ChEBI" id="CHEBI:57856"/>
        <dbReference type="ChEBI" id="CHEBI:59789"/>
        <dbReference type="ChEBI" id="CHEBI:84166"/>
        <dbReference type="ChEBI" id="CHEBI:84167"/>
        <dbReference type="EC" id="2.1.1.201"/>
    </reaction>
</comment>
<comment type="pathway">
    <text evidence="1">Quinol/quinone metabolism; menaquinone biosynthesis; menaquinol from 1,4-dihydroxy-2-naphthoate: step 2/2.</text>
</comment>
<comment type="pathway">
    <text evidence="1">Cofactor biosynthesis; ubiquinone biosynthesis.</text>
</comment>
<comment type="similarity">
    <text evidence="1">Belongs to the class I-like SAM-binding methyltransferase superfamily. MenG/UbiE family.</text>
</comment>
<sequence length="238" mass="27250">MSTIKIEKKSQLVKEVFDSVASRYDTMNDIMSLGMHRLWKDKMVNSVHFTKNSKVLDVAGGTGDIAIRVVRKEPSAKVTVCDINQNMLNRGRDKAINSNQINFDWVCASAESLPFEDSEFDYCTIAFGIRNVSDRKKALNEAHRVLKPHGKFICLEFAPMHYQNEIFTKLYDLYSFKVIPKIGSIVAKDKSSYEYLVRSIREFPTQADFKMEIEEVGFKNVEFHNMSYGIVALHIGTK</sequence>
<proteinExistence type="inferred from homology"/>
<evidence type="ECO:0000255" key="1">
    <source>
        <dbReference type="HAMAP-Rule" id="MF_01813"/>
    </source>
</evidence>
<feature type="chain" id="PRO_0000193352" description="Ubiquinone/menaquinone biosynthesis C-methyltransferase UbiE">
    <location>
        <begin position="1"/>
        <end position="238"/>
    </location>
</feature>
<feature type="binding site" evidence="1">
    <location>
        <position position="62"/>
    </location>
    <ligand>
        <name>S-adenosyl-L-methionine</name>
        <dbReference type="ChEBI" id="CHEBI:59789"/>
    </ligand>
</feature>
<feature type="binding site" evidence="1">
    <location>
        <position position="82"/>
    </location>
    <ligand>
        <name>S-adenosyl-L-methionine</name>
        <dbReference type="ChEBI" id="CHEBI:59789"/>
    </ligand>
</feature>
<dbReference type="EC" id="2.1.1.163" evidence="1"/>
<dbReference type="EC" id="2.1.1.201" evidence="1"/>
<dbReference type="EMBL" id="AE017196">
    <property type="protein sequence ID" value="AAS14119.1"/>
    <property type="molecule type" value="Genomic_DNA"/>
</dbReference>
<dbReference type="RefSeq" id="WP_010962557.1">
    <property type="nucleotide sequence ID" value="NZ_OX384529.1"/>
</dbReference>
<dbReference type="SMR" id="Q73HZ4"/>
<dbReference type="EnsemblBacteria" id="AAS14119">
    <property type="protein sequence ID" value="AAS14119"/>
    <property type="gene ID" value="WD_0393"/>
</dbReference>
<dbReference type="GeneID" id="70035888"/>
<dbReference type="KEGG" id="wol:WD_0393"/>
<dbReference type="eggNOG" id="COG2226">
    <property type="taxonomic scope" value="Bacteria"/>
</dbReference>
<dbReference type="UniPathway" id="UPA00079">
    <property type="reaction ID" value="UER00169"/>
</dbReference>
<dbReference type="UniPathway" id="UPA00232"/>
<dbReference type="Proteomes" id="UP000008215">
    <property type="component" value="Chromosome"/>
</dbReference>
<dbReference type="GO" id="GO:0008425">
    <property type="term" value="F:2-methoxy-6-polyprenyl-1,4-benzoquinol methyltransferase activity"/>
    <property type="evidence" value="ECO:0007669"/>
    <property type="project" value="UniProtKB-UniRule"/>
</dbReference>
<dbReference type="GO" id="GO:0043770">
    <property type="term" value="F:demethylmenaquinone methyltransferase activity"/>
    <property type="evidence" value="ECO:0007669"/>
    <property type="project" value="UniProtKB-UniRule"/>
</dbReference>
<dbReference type="GO" id="GO:0009060">
    <property type="term" value="P:aerobic respiration"/>
    <property type="evidence" value="ECO:0007669"/>
    <property type="project" value="UniProtKB-UniRule"/>
</dbReference>
<dbReference type="GO" id="GO:0009234">
    <property type="term" value="P:menaquinone biosynthetic process"/>
    <property type="evidence" value="ECO:0007669"/>
    <property type="project" value="UniProtKB-UniRule"/>
</dbReference>
<dbReference type="GO" id="GO:0032259">
    <property type="term" value="P:methylation"/>
    <property type="evidence" value="ECO:0007669"/>
    <property type="project" value="UniProtKB-KW"/>
</dbReference>
<dbReference type="CDD" id="cd02440">
    <property type="entry name" value="AdoMet_MTases"/>
    <property type="match status" value="1"/>
</dbReference>
<dbReference type="Gene3D" id="3.40.50.150">
    <property type="entry name" value="Vaccinia Virus protein VP39"/>
    <property type="match status" value="1"/>
</dbReference>
<dbReference type="HAMAP" id="MF_01813">
    <property type="entry name" value="MenG_UbiE_methyltr"/>
    <property type="match status" value="1"/>
</dbReference>
<dbReference type="InterPro" id="IPR029063">
    <property type="entry name" value="SAM-dependent_MTases_sf"/>
</dbReference>
<dbReference type="InterPro" id="IPR004033">
    <property type="entry name" value="UbiE/COQ5_MeTrFase"/>
</dbReference>
<dbReference type="InterPro" id="IPR023576">
    <property type="entry name" value="UbiE/COQ5_MeTrFase_CS"/>
</dbReference>
<dbReference type="NCBIfam" id="TIGR01934">
    <property type="entry name" value="MenG_MenH_UbiE"/>
    <property type="match status" value="1"/>
</dbReference>
<dbReference type="NCBIfam" id="NF001244">
    <property type="entry name" value="PRK00216.1-5"/>
    <property type="match status" value="1"/>
</dbReference>
<dbReference type="PANTHER" id="PTHR43591:SF24">
    <property type="entry name" value="2-METHOXY-6-POLYPRENYL-1,4-BENZOQUINOL METHYLASE, MITOCHONDRIAL"/>
    <property type="match status" value="1"/>
</dbReference>
<dbReference type="PANTHER" id="PTHR43591">
    <property type="entry name" value="METHYLTRANSFERASE"/>
    <property type="match status" value="1"/>
</dbReference>
<dbReference type="Pfam" id="PF01209">
    <property type="entry name" value="Ubie_methyltran"/>
    <property type="match status" value="1"/>
</dbReference>
<dbReference type="SUPFAM" id="SSF53335">
    <property type="entry name" value="S-adenosyl-L-methionine-dependent methyltransferases"/>
    <property type="match status" value="1"/>
</dbReference>
<dbReference type="PROSITE" id="PS51608">
    <property type="entry name" value="SAM_MT_UBIE"/>
    <property type="match status" value="1"/>
</dbReference>
<dbReference type="PROSITE" id="PS01183">
    <property type="entry name" value="UBIE_1"/>
    <property type="match status" value="1"/>
</dbReference>
<reference key="1">
    <citation type="journal article" date="2004" name="PLoS Biol.">
        <title>Phylogenomics of the reproductive parasite Wolbachia pipientis wMel: a streamlined genome overrun by mobile genetic elements.</title>
        <authorList>
            <person name="Wu M."/>
            <person name="Sun L.V."/>
            <person name="Vamathevan J.J."/>
            <person name="Riegler M."/>
            <person name="DeBoy R.T."/>
            <person name="Brownlie J.C."/>
            <person name="McGraw E.A."/>
            <person name="Martin W."/>
            <person name="Esser C."/>
            <person name="Ahmadinejad N."/>
            <person name="Wiegand C."/>
            <person name="Madupu R."/>
            <person name="Beanan M.J."/>
            <person name="Brinkac L.M."/>
            <person name="Daugherty S.C."/>
            <person name="Durkin A.S."/>
            <person name="Kolonay J.F."/>
            <person name="Nelson W.C."/>
            <person name="Mohamoud Y."/>
            <person name="Lee P."/>
            <person name="Berry K.J."/>
            <person name="Young M.B."/>
            <person name="Utterback T.R."/>
            <person name="Weidman J.F."/>
            <person name="Nierman W.C."/>
            <person name="Paulsen I.T."/>
            <person name="Nelson K.E."/>
            <person name="Tettelin H."/>
            <person name="O'Neill S.L."/>
            <person name="Eisen J.A."/>
        </authorList>
    </citation>
    <scope>NUCLEOTIDE SEQUENCE [LARGE SCALE GENOMIC DNA]</scope>
</reference>
<accession>Q73HZ4</accession>